<gene>
    <name type="primary">CABS1</name>
    <name type="ORF">QtsA-12769</name>
    <name type="ORF">QtsA-13567</name>
</gene>
<proteinExistence type="evidence at transcript level"/>
<organism>
    <name type="scientific">Macaca fascicularis</name>
    <name type="common">Crab-eating macaque</name>
    <name type="synonym">Cynomolgus monkey</name>
    <dbReference type="NCBI Taxonomy" id="9541"/>
    <lineage>
        <taxon>Eukaryota</taxon>
        <taxon>Metazoa</taxon>
        <taxon>Chordata</taxon>
        <taxon>Craniata</taxon>
        <taxon>Vertebrata</taxon>
        <taxon>Euteleostomi</taxon>
        <taxon>Mammalia</taxon>
        <taxon>Eutheria</taxon>
        <taxon>Euarchontoglires</taxon>
        <taxon>Primates</taxon>
        <taxon>Haplorrhini</taxon>
        <taxon>Catarrhini</taxon>
        <taxon>Cercopithecidae</taxon>
        <taxon>Cercopithecinae</taxon>
        <taxon>Macaca</taxon>
    </lineage>
</organism>
<name>CABS1_MACFA</name>
<dbReference type="EMBL" id="AB070062">
    <property type="protein sequence ID" value="BAB63007.1"/>
    <property type="molecule type" value="mRNA"/>
</dbReference>
<dbReference type="EMBL" id="AB070055">
    <property type="protein sequence ID" value="BAB63000.1"/>
    <property type="molecule type" value="mRNA"/>
</dbReference>
<dbReference type="RefSeq" id="NP_001306306.1">
    <property type="nucleotide sequence ID" value="NM_001319377.1"/>
</dbReference>
<dbReference type="SMR" id="Q95JW6"/>
<dbReference type="eggNOG" id="ENOG502RWWC">
    <property type="taxonomic scope" value="Eukaryota"/>
</dbReference>
<dbReference type="Proteomes" id="UP000233100">
    <property type="component" value="Unplaced"/>
</dbReference>
<dbReference type="GO" id="GO:0001669">
    <property type="term" value="C:acrosomal vesicle"/>
    <property type="evidence" value="ECO:0000250"/>
    <property type="project" value="UniProtKB"/>
</dbReference>
<dbReference type="GO" id="GO:0005743">
    <property type="term" value="C:mitochondrial inner membrane"/>
    <property type="evidence" value="ECO:0007669"/>
    <property type="project" value="UniProtKB-SubCell"/>
</dbReference>
<dbReference type="GO" id="GO:0031514">
    <property type="term" value="C:motile cilium"/>
    <property type="evidence" value="ECO:0000250"/>
    <property type="project" value="UniProtKB"/>
</dbReference>
<dbReference type="GO" id="GO:0097228">
    <property type="term" value="C:sperm principal piece"/>
    <property type="evidence" value="ECO:0000250"/>
    <property type="project" value="UniProtKB"/>
</dbReference>
<dbReference type="GO" id="GO:0005509">
    <property type="term" value="F:calcium ion binding"/>
    <property type="evidence" value="ECO:0000250"/>
    <property type="project" value="UniProtKB"/>
</dbReference>
<dbReference type="GO" id="GO:0030317">
    <property type="term" value="P:flagellated sperm motility"/>
    <property type="evidence" value="ECO:0000250"/>
    <property type="project" value="UniProtKB"/>
</dbReference>
<dbReference type="GO" id="GO:0007283">
    <property type="term" value="P:spermatogenesis"/>
    <property type="evidence" value="ECO:0007669"/>
    <property type="project" value="InterPro"/>
</dbReference>
<dbReference type="InterPro" id="IPR026118">
    <property type="entry name" value="Ca-bd_spermatid"/>
</dbReference>
<dbReference type="PANTHER" id="PTHR22810:SF1">
    <property type="entry name" value="CALCIUM-BINDING AND SPERMATID-SPECIFIC PROTEIN 1"/>
    <property type="match status" value="1"/>
</dbReference>
<dbReference type="PANTHER" id="PTHR22810">
    <property type="entry name" value="TESTIS DEVELOPMENT PROTEIN NYD-SP26"/>
    <property type="match status" value="1"/>
</dbReference>
<dbReference type="Pfam" id="PF15367">
    <property type="entry name" value="CABS1"/>
    <property type="match status" value="1"/>
</dbReference>
<feature type="chain" id="PRO_0000339179" description="Calcium-binding and spermatid-specific protein 1">
    <location>
        <begin position="1"/>
        <end position="396"/>
    </location>
</feature>
<feature type="region of interest" description="Disordered" evidence="3">
    <location>
        <begin position="1"/>
        <end position="21"/>
    </location>
</feature>
<feature type="region of interest" description="Disordered" evidence="3">
    <location>
        <begin position="276"/>
        <end position="296"/>
    </location>
</feature>
<feature type="region of interest" description="Disordered" evidence="3">
    <location>
        <begin position="336"/>
        <end position="396"/>
    </location>
</feature>
<feature type="compositionally biased region" description="Acidic residues" evidence="3">
    <location>
        <begin position="283"/>
        <end position="293"/>
    </location>
</feature>
<feature type="modified residue" description="Phosphoserine" evidence="1">
    <location>
        <position position="274"/>
    </location>
</feature>
<feature type="modified residue" description="Phosphothreonine; by CK2" evidence="1">
    <location>
        <position position="288"/>
    </location>
</feature>
<feature type="modified residue" description="Phosphoserine" evidence="1">
    <location>
        <position position="320"/>
    </location>
</feature>
<feature type="modified residue" description="Phosphoserine" evidence="1">
    <location>
        <position position="377"/>
    </location>
</feature>
<feature type="sequence conflict" description="In Ref. 2; BAB63000." evidence="4" ref="2">
    <original>A</original>
    <variation>T</variation>
    <location>
        <position position="64"/>
    </location>
</feature>
<feature type="sequence conflict" description="In Ref. 2; BAB63000." evidence="4" ref="2">
    <original>G</original>
    <variation>S</variation>
    <location>
        <position position="101"/>
    </location>
</feature>
<feature type="sequence conflict" description="In Ref. 2; BAB63000." evidence="4" ref="2">
    <original>T</original>
    <variation>I</variation>
    <location>
        <position position="227"/>
    </location>
</feature>
<feature type="sequence conflict" description="In Ref. 2; BAB63000." evidence="4" ref="2">
    <original>M</original>
    <variation>I</variation>
    <location>
        <position position="239"/>
    </location>
</feature>
<feature type="sequence conflict" description="In Ref. 2; BAB63000." evidence="4" ref="2">
    <original>S</original>
    <variation>G</variation>
    <location>
        <position position="252"/>
    </location>
</feature>
<feature type="sequence conflict" description="In Ref. 2; BAB63000." evidence="4" ref="2">
    <original>M</original>
    <variation>I</variation>
    <location>
        <position position="298"/>
    </location>
</feature>
<evidence type="ECO:0000250" key="1">
    <source>
        <dbReference type="UniProtKB" id="Q68FX6"/>
    </source>
</evidence>
<evidence type="ECO:0000250" key="2">
    <source>
        <dbReference type="UniProtKB" id="Q8C633"/>
    </source>
</evidence>
<evidence type="ECO:0000256" key="3">
    <source>
        <dbReference type="SAM" id="MobiDB-lite"/>
    </source>
</evidence>
<evidence type="ECO:0000305" key="4"/>
<sequence length="396" mass="43214">MAEDGLPKIYSHPPTESSKTPTAATIFFGADNAIPKSETTITSEGDHVTSVNEYVLESDFSTTADNKLTPTKEKLRSEDDMGTDFIKSTTHLQKEITSLTGTANSITRDSITENFMTVKIGNISSPVTTVSLIDFSTDIAKEDILLDTIDTGDAEILITSEVSGTLKDSSAGVADTPAFPRIKDEADMNNYNSSIKSNVPADEAIQVTDSIIPEAEIPPAPEVNFTTIPDITALEEEKMTKIDLSVLEDDTSAVATLTDSDEEKFITVFELTTSAEKDKDNQEDTLLTDEESPEGANMWMERETATEAETHSVLLTAVESRYDFVVPASIATNLVEDSSTEEELSETDRTETVPKITEPFSGTSSVLDTPDYKEDTSTTETDIFELLKEEPDEFMI</sequence>
<reference key="1">
    <citation type="submission" date="2001-08" db="EMBL/GenBank/DDBJ databases">
        <title>Isolation of novel full-length cDNA clones from macaque testis cDNA libraries.</title>
        <authorList>
            <person name="Hashimoto K."/>
            <person name="Osada N."/>
            <person name="Hida M."/>
            <person name="Kusuda J."/>
            <person name="Tanuma R."/>
            <person name="Hirai M."/>
            <person name="Terao K."/>
            <person name="Sugano S."/>
        </authorList>
    </citation>
    <scope>NUCLEOTIDE SEQUENCE [LARGE SCALE MRNA]</scope>
    <source>
        <tissue>Testis</tissue>
    </source>
</reference>
<reference key="2">
    <citation type="journal article" date="2002" name="BMC Genomics">
        <title>Cynomolgus monkey testicular cDNAs for discovery of novel human genes in the human genome sequence.</title>
        <authorList>
            <person name="Osada N."/>
            <person name="Hida M."/>
            <person name="Kusuda J."/>
            <person name="Tanuma R."/>
            <person name="Hirata M."/>
            <person name="Suto Y."/>
            <person name="Hirai M."/>
            <person name="Terao K."/>
            <person name="Sugano S."/>
            <person name="Hashimoto K."/>
        </authorList>
    </citation>
    <scope>NUCLEOTIDE SEQUENCE [LARGE SCALE MRNA]</scope>
    <source>
        <tissue>Testis</tissue>
    </source>
</reference>
<comment type="function">
    <text evidence="1 2">Calcium-binding protein (By similarity). Essential for maintaining the structural integrity of the sperm flagella (By similarity).</text>
</comment>
<comment type="subcellular location">
    <subcellularLocation>
        <location evidence="1">Cytoplasm</location>
    </subcellularLocation>
    <subcellularLocation>
        <location evidence="1">Mitochondrion inner membrane</location>
    </subcellularLocation>
    <subcellularLocation>
        <location evidence="2">Cell projection</location>
        <location evidence="2">Cilium</location>
        <location evidence="2">Flagellum</location>
    </subcellularLocation>
    <subcellularLocation>
        <location evidence="2">Cytoplasmic vesicle</location>
        <location evidence="2">Secretory vesicle</location>
        <location evidence="2">Acrosome</location>
    </subcellularLocation>
    <text evidence="1 2">Mostly cytoplasmic, but associated with the mitochondrial inner membrane during the last steps of spermatid differentiation. Localizes to the principal piece of the sperm flagellum (By similarity).</text>
</comment>
<keyword id="KW-0106">Calcium</keyword>
<keyword id="KW-0966">Cell projection</keyword>
<keyword id="KW-0969">Cilium</keyword>
<keyword id="KW-0963">Cytoplasm</keyword>
<keyword id="KW-0968">Cytoplasmic vesicle</keyword>
<keyword id="KW-0282">Flagellum</keyword>
<keyword id="KW-0472">Membrane</keyword>
<keyword id="KW-0496">Mitochondrion</keyword>
<keyword id="KW-0999">Mitochondrion inner membrane</keyword>
<keyword id="KW-0597">Phosphoprotein</keyword>
<keyword id="KW-1185">Reference proteome</keyword>
<protein>
    <recommendedName>
        <fullName>Calcium-binding and spermatid-specific protein 1</fullName>
    </recommendedName>
</protein>
<accession>Q95JW6</accession>
<accession>Q95JX2</accession>